<protein>
    <recommendedName>
        <fullName evidence="1">Putative pre-16S rRNA nuclease</fullName>
        <ecNumber evidence="1">3.1.-.-</ecNumber>
    </recommendedName>
</protein>
<comment type="function">
    <text evidence="1">Could be a nuclease involved in processing of the 5'-end of pre-16S rRNA.</text>
</comment>
<comment type="subcellular location">
    <subcellularLocation>
        <location evidence="1">Cytoplasm</location>
    </subcellularLocation>
</comment>
<comment type="similarity">
    <text evidence="1">Belongs to the YqgF nuclease family.</text>
</comment>
<accession>B2USG5</accession>
<dbReference type="EC" id="3.1.-.-" evidence="1"/>
<dbReference type="EMBL" id="CP001072">
    <property type="protein sequence ID" value="ACD47797.1"/>
    <property type="molecule type" value="Genomic_DNA"/>
</dbReference>
<dbReference type="RefSeq" id="WP_000599240.1">
    <property type="nucleotide sequence ID" value="NC_010698.2"/>
</dbReference>
<dbReference type="SMR" id="B2USG5"/>
<dbReference type="KEGG" id="hps:HPSH_01735"/>
<dbReference type="HOGENOM" id="CLU_098240_2_2_7"/>
<dbReference type="GO" id="GO:0005829">
    <property type="term" value="C:cytosol"/>
    <property type="evidence" value="ECO:0007669"/>
    <property type="project" value="TreeGrafter"/>
</dbReference>
<dbReference type="GO" id="GO:0004518">
    <property type="term" value="F:nuclease activity"/>
    <property type="evidence" value="ECO:0007669"/>
    <property type="project" value="UniProtKB-KW"/>
</dbReference>
<dbReference type="GO" id="GO:0000967">
    <property type="term" value="P:rRNA 5'-end processing"/>
    <property type="evidence" value="ECO:0007669"/>
    <property type="project" value="UniProtKB-UniRule"/>
</dbReference>
<dbReference type="CDD" id="cd16964">
    <property type="entry name" value="YqgF"/>
    <property type="match status" value="1"/>
</dbReference>
<dbReference type="FunFam" id="3.30.420.140:FF:000013">
    <property type="entry name" value="Putative pre-16S rRNA nuclease"/>
    <property type="match status" value="1"/>
</dbReference>
<dbReference type="Gene3D" id="3.30.420.140">
    <property type="entry name" value="YqgF/RNase H-like domain"/>
    <property type="match status" value="1"/>
</dbReference>
<dbReference type="HAMAP" id="MF_00651">
    <property type="entry name" value="Nuclease_YqgF"/>
    <property type="match status" value="1"/>
</dbReference>
<dbReference type="InterPro" id="IPR012337">
    <property type="entry name" value="RNaseH-like_sf"/>
</dbReference>
<dbReference type="InterPro" id="IPR005227">
    <property type="entry name" value="YqgF"/>
</dbReference>
<dbReference type="InterPro" id="IPR006641">
    <property type="entry name" value="YqgF/RNaseH-like_dom"/>
</dbReference>
<dbReference type="InterPro" id="IPR037027">
    <property type="entry name" value="YqgF/RNaseH-like_dom_sf"/>
</dbReference>
<dbReference type="NCBIfam" id="NF001026">
    <property type="entry name" value="PRK00109.2-2"/>
    <property type="match status" value="1"/>
</dbReference>
<dbReference type="PANTHER" id="PTHR33317">
    <property type="entry name" value="POLYNUCLEOTIDYL TRANSFERASE, RIBONUCLEASE H-LIKE SUPERFAMILY PROTEIN"/>
    <property type="match status" value="1"/>
</dbReference>
<dbReference type="PANTHER" id="PTHR33317:SF4">
    <property type="entry name" value="POLYNUCLEOTIDYL TRANSFERASE, RIBONUCLEASE H-LIKE SUPERFAMILY PROTEIN"/>
    <property type="match status" value="1"/>
</dbReference>
<dbReference type="Pfam" id="PF03652">
    <property type="entry name" value="RuvX"/>
    <property type="match status" value="1"/>
</dbReference>
<dbReference type="SMART" id="SM00732">
    <property type="entry name" value="YqgFc"/>
    <property type="match status" value="1"/>
</dbReference>
<dbReference type="SUPFAM" id="SSF53098">
    <property type="entry name" value="Ribonuclease H-like"/>
    <property type="match status" value="1"/>
</dbReference>
<name>YQGF_HELPS</name>
<feature type="chain" id="PRO_1000131040" description="Putative pre-16S rRNA nuclease">
    <location>
        <begin position="1"/>
        <end position="134"/>
    </location>
</feature>
<keyword id="KW-0963">Cytoplasm</keyword>
<keyword id="KW-0378">Hydrolase</keyword>
<keyword id="KW-0540">Nuclease</keyword>
<keyword id="KW-0690">Ribosome biogenesis</keyword>
<organism>
    <name type="scientific">Helicobacter pylori (strain Shi470)</name>
    <dbReference type="NCBI Taxonomy" id="512562"/>
    <lineage>
        <taxon>Bacteria</taxon>
        <taxon>Pseudomonadati</taxon>
        <taxon>Campylobacterota</taxon>
        <taxon>Epsilonproteobacteria</taxon>
        <taxon>Campylobacterales</taxon>
        <taxon>Helicobacteraceae</taxon>
        <taxon>Helicobacter</taxon>
    </lineage>
</organism>
<evidence type="ECO:0000255" key="1">
    <source>
        <dbReference type="HAMAP-Rule" id="MF_00651"/>
    </source>
</evidence>
<reference key="1">
    <citation type="submission" date="2008-05" db="EMBL/GenBank/DDBJ databases">
        <title>Genome sequence of Helicobacter pylori from the remote Amazon: traces of Asian ancestry of the first Americans.</title>
        <authorList>
            <person name="Kersulyte D."/>
            <person name="Kalia A."/>
            <person name="Gilman R.H."/>
            <person name="Berg D.E."/>
        </authorList>
    </citation>
    <scope>NUCLEOTIDE SEQUENCE [LARGE SCALE GENOMIC DNA]</scope>
    <source>
        <strain>Shi470</strain>
    </source>
</reference>
<sequence length="134" mass="15150">MILACDVGLKRIGIAVLLNGVILPLEAILRHNRNQASRDLNDLLREKNIQVLVVGKPNESYADTNARIEHFIKLLDFKGEIVFINEDRSSIEAYENLGHLGKKNKRLAIKDGRLDSLSACGILERYCQQVLKNR</sequence>
<proteinExistence type="inferred from homology"/>
<gene>
    <name type="ordered locus">HPSH_01735</name>
</gene>